<reference key="1">
    <citation type="submission" date="2006-10" db="EMBL/GenBank/DDBJ databases">
        <authorList>
            <consortium name="NIH - Mammalian Gene Collection (MGC) project"/>
        </authorList>
    </citation>
    <scope>NUCLEOTIDE SEQUENCE [LARGE SCALE MRNA]</scope>
    <source>
        <strain>Hereford</strain>
        <tissue>Thalamus</tissue>
    </source>
</reference>
<proteinExistence type="evidence at transcript level"/>
<keyword id="KW-1003">Cell membrane</keyword>
<keyword id="KW-0325">Glycoprotein</keyword>
<keyword id="KW-0945">Host-virus interaction</keyword>
<keyword id="KW-0406">Ion transport</keyword>
<keyword id="KW-0472">Membrane</keyword>
<keyword id="KW-0592">Phosphate transport</keyword>
<keyword id="KW-0597">Phosphoprotein</keyword>
<keyword id="KW-0675">Receptor</keyword>
<keyword id="KW-1185">Reference proteome</keyword>
<keyword id="KW-0915">Sodium</keyword>
<keyword id="KW-0739">Sodium transport</keyword>
<keyword id="KW-0769">Symport</keyword>
<keyword id="KW-0812">Transmembrane</keyword>
<keyword id="KW-1133">Transmembrane helix</keyword>
<keyword id="KW-0813">Transport</keyword>
<name>S20A2_BOVIN</name>
<sequence length="645" mass="69610">MAMDEYLWMVILGFIIAFILAFSVGANDVANSFGTAVGSGVVTLRQACILASIFETTGSVLLGAKVGETIRKGIIDVNLYNNTVETLMAGEVSAMVGSAVWQLIASFLRFPISGTHCIVGATIGFSLVAIGTQGVQWMELVKIVASWFISPLLSGFMSGVLFVLIRMFILKKEDPVPNGLRALPVFYAATIAINVFSIMYTGAPVMGLVLPMWAIALISFGVALLFALFVWLFVCPWMRRKITGKLQKECALSRASDESLNKIQEVESPVFKELPGAKAHDDSTVPLTGSAADPSGTSESMSGGHHPRAPYGRALSMTHGTTKSPVSNGTFGFDGTARADGHVYHTVHKDSGLYKDLLHRIRDERPADGAPRQLRRNNSYTCYTAAICGLPGLATRRGDTPAPEDSEKLVADAVAYSRRRLRYDSYSSYCNAVAEAEIEAEEGGVEVRLAPPLAEPEPPRDDPADEEKEEKDSPEVHLLFHFLQVLTACFGSFAHGGNDVSNAIGPLVALWLIYEQGAVLQEAATPVWLLFYGGVGICTGLWVWGRRVIQTMGKDLTPITPSSGFTIELASAFTVVIASNIGLPVSTTHCKVGSVVAVGWIRSRKAVDWRLFRNIFVAWFVTVPVAGLFSAAIMALLIHGILPFV</sequence>
<gene>
    <name type="primary">SLC20A2</name>
    <name type="synonym">PIT2</name>
</gene>
<dbReference type="EMBL" id="BC126506">
    <property type="protein sequence ID" value="AAI26507.1"/>
    <property type="molecule type" value="mRNA"/>
</dbReference>
<dbReference type="RefSeq" id="NP_001073749.1">
    <property type="nucleotide sequence ID" value="NM_001080280.1"/>
</dbReference>
<dbReference type="SMR" id="A1A4I1"/>
<dbReference type="FunCoup" id="A1A4I1">
    <property type="interactions" value="779"/>
</dbReference>
<dbReference type="STRING" id="9913.ENSBTAP00000019790"/>
<dbReference type="GlyCosmos" id="A1A4I1">
    <property type="glycosylation" value="1 site, No reported glycans"/>
</dbReference>
<dbReference type="GlyGen" id="A1A4I1">
    <property type="glycosylation" value="1 site"/>
</dbReference>
<dbReference type="iPTMnet" id="A1A4I1"/>
<dbReference type="PaxDb" id="9913-ENSBTAP00000056283"/>
<dbReference type="GeneID" id="518905"/>
<dbReference type="KEGG" id="bta:518905"/>
<dbReference type="CTD" id="6575"/>
<dbReference type="eggNOG" id="KOG2493">
    <property type="taxonomic scope" value="Eukaryota"/>
</dbReference>
<dbReference type="InParanoid" id="A1A4I1"/>
<dbReference type="OrthoDB" id="260807at2759"/>
<dbReference type="Proteomes" id="UP000009136">
    <property type="component" value="Unplaced"/>
</dbReference>
<dbReference type="GO" id="GO:0016324">
    <property type="term" value="C:apical plasma membrane"/>
    <property type="evidence" value="ECO:0000250"/>
    <property type="project" value="UniProtKB"/>
</dbReference>
<dbReference type="GO" id="GO:0031526">
    <property type="term" value="C:brush border membrane"/>
    <property type="evidence" value="ECO:0000250"/>
    <property type="project" value="UniProtKB"/>
</dbReference>
<dbReference type="GO" id="GO:0005886">
    <property type="term" value="C:plasma membrane"/>
    <property type="evidence" value="ECO:0000250"/>
    <property type="project" value="UniProtKB"/>
</dbReference>
<dbReference type="GO" id="GO:0005315">
    <property type="term" value="F:phosphate transmembrane transporter activity"/>
    <property type="evidence" value="ECO:0000318"/>
    <property type="project" value="GO_Central"/>
</dbReference>
<dbReference type="GO" id="GO:0005436">
    <property type="term" value="F:sodium:phosphate symporter activity"/>
    <property type="evidence" value="ECO:0000250"/>
    <property type="project" value="UniProtKB"/>
</dbReference>
<dbReference type="GO" id="GO:0035435">
    <property type="term" value="P:phosphate ion transmembrane transport"/>
    <property type="evidence" value="ECO:0000318"/>
    <property type="project" value="GO_Central"/>
</dbReference>
<dbReference type="GO" id="GO:0030501">
    <property type="term" value="P:positive regulation of bone mineralization"/>
    <property type="evidence" value="ECO:0000250"/>
    <property type="project" value="UniProtKB"/>
</dbReference>
<dbReference type="InterPro" id="IPR001204">
    <property type="entry name" value="Phos_transporter"/>
</dbReference>
<dbReference type="PANTHER" id="PTHR11101">
    <property type="entry name" value="PHOSPHATE TRANSPORTER"/>
    <property type="match status" value="1"/>
</dbReference>
<dbReference type="PANTHER" id="PTHR11101:SF83">
    <property type="entry name" value="SODIUM-DEPENDENT PHOSPHATE TRANSPORTER 2"/>
    <property type="match status" value="1"/>
</dbReference>
<dbReference type="Pfam" id="PF01384">
    <property type="entry name" value="PHO4"/>
    <property type="match status" value="1"/>
</dbReference>
<protein>
    <recommendedName>
        <fullName>Sodium-dependent phosphate transporter 2</fullName>
    </recommendedName>
    <alternativeName>
        <fullName>Phosphate transporter 2</fullName>
        <shortName>PiT-2</shortName>
    </alternativeName>
    <alternativeName>
        <fullName>Solute carrier family 20 member 2</fullName>
    </alternativeName>
</protein>
<feature type="chain" id="PRO_0000341265" description="Sodium-dependent phosphate transporter 2">
    <location>
        <begin position="1"/>
        <end position="645"/>
    </location>
</feature>
<feature type="topological domain" description="Extracellular" evidence="3">
    <location>
        <begin position="1"/>
        <end position="5"/>
    </location>
</feature>
<feature type="transmembrane region" description="Helical" evidence="3">
    <location>
        <begin position="6"/>
        <end position="26"/>
    </location>
</feature>
<feature type="topological domain" description="Cytoplasmic" evidence="3">
    <location>
        <begin position="27"/>
        <end position="46"/>
    </location>
</feature>
<feature type="transmembrane region" description="Helical" evidence="3">
    <location>
        <begin position="47"/>
        <end position="67"/>
    </location>
</feature>
<feature type="topological domain" description="Extracellular" evidence="3">
    <location>
        <begin position="68"/>
        <end position="86"/>
    </location>
</feature>
<feature type="transmembrane region" description="Helical" evidence="3">
    <location>
        <begin position="87"/>
        <end position="107"/>
    </location>
</feature>
<feature type="topological domain" description="Cytoplasmic" evidence="3">
    <location>
        <begin position="108"/>
        <end position="109"/>
    </location>
</feature>
<feature type="transmembrane region" description="Helical" evidence="3">
    <location>
        <begin position="110"/>
        <end position="130"/>
    </location>
</feature>
<feature type="topological domain" description="Extracellular" evidence="3">
    <location>
        <begin position="131"/>
        <end position="142"/>
    </location>
</feature>
<feature type="transmembrane region" description="Helical" evidence="3">
    <location>
        <begin position="143"/>
        <end position="163"/>
    </location>
</feature>
<feature type="topological domain" description="Cytoplasmic" evidence="3">
    <location>
        <begin position="164"/>
        <end position="190"/>
    </location>
</feature>
<feature type="transmembrane region" description="Helical" evidence="3">
    <location>
        <begin position="191"/>
        <end position="211"/>
    </location>
</feature>
<feature type="topological domain" description="Extracellular" evidence="3">
    <location>
        <begin position="212"/>
        <end position="213"/>
    </location>
</feature>
<feature type="transmembrane region" description="Helical" evidence="3">
    <location>
        <begin position="214"/>
        <end position="234"/>
    </location>
</feature>
<feature type="topological domain" description="Cytoplasmic" evidence="3">
    <location>
        <begin position="235"/>
        <end position="475"/>
    </location>
</feature>
<feature type="transmembrane region" description="Helical" evidence="3">
    <location>
        <begin position="476"/>
        <end position="496"/>
    </location>
</feature>
<feature type="topological domain" description="Extracellular" evidence="3">
    <location>
        <begin position="497"/>
        <end position="523"/>
    </location>
</feature>
<feature type="transmembrane region" description="Helical" evidence="3">
    <location>
        <begin position="524"/>
        <end position="544"/>
    </location>
</feature>
<feature type="topological domain" description="Cytoplasmic" evidence="3">
    <location>
        <begin position="545"/>
        <end position="564"/>
    </location>
</feature>
<feature type="transmembrane region" description="Helical" evidence="3">
    <location>
        <begin position="565"/>
        <end position="579"/>
    </location>
</feature>
<feature type="topological domain" description="Extracellular" evidence="3">
    <location>
        <begin position="580"/>
        <end position="586"/>
    </location>
</feature>
<feature type="transmembrane region" description="Helical" evidence="3">
    <location>
        <begin position="587"/>
        <end position="602"/>
    </location>
</feature>
<feature type="topological domain" description="Cytoplasmic" evidence="3">
    <location>
        <begin position="603"/>
        <end position="614"/>
    </location>
</feature>
<feature type="transmembrane region" description="Helical" evidence="3">
    <location>
        <begin position="615"/>
        <end position="635"/>
    </location>
</feature>
<feature type="topological domain" description="Extracellular" evidence="3">
    <location>
        <begin position="636"/>
        <end position="645"/>
    </location>
</feature>
<feature type="region of interest" description="Disordered" evidence="4">
    <location>
        <begin position="275"/>
        <end position="320"/>
    </location>
</feature>
<feature type="region of interest" description="Disordered" evidence="4">
    <location>
        <begin position="448"/>
        <end position="471"/>
    </location>
</feature>
<feature type="modified residue" description="Phosphoserine" evidence="2">
    <location>
        <position position="253"/>
    </location>
</feature>
<feature type="modified residue" description="Phosphoserine" evidence="1">
    <location>
        <position position="256"/>
    </location>
</feature>
<feature type="modified residue" description="Phosphoserine" evidence="1">
    <location>
        <position position="259"/>
    </location>
</feature>
<feature type="modified residue" description="Phosphoserine" evidence="1">
    <location>
        <position position="268"/>
    </location>
</feature>
<feature type="modified residue" description="Phosphoserine" evidence="1">
    <location>
        <position position="316"/>
    </location>
</feature>
<feature type="modified residue" description="Phosphoserine" evidence="1">
    <location>
        <position position="379"/>
    </location>
</feature>
<feature type="glycosylation site" description="N-linked (GlcNAc...) asparagine" evidence="3">
    <location>
        <position position="81"/>
    </location>
</feature>
<evidence type="ECO:0000250" key="1">
    <source>
        <dbReference type="UniProtKB" id="Q08357"/>
    </source>
</evidence>
<evidence type="ECO:0000250" key="2">
    <source>
        <dbReference type="UniProtKB" id="Q63488"/>
    </source>
</evidence>
<evidence type="ECO:0000255" key="3"/>
<evidence type="ECO:0000256" key="4">
    <source>
        <dbReference type="SAM" id="MobiDB-lite"/>
    </source>
</evidence>
<evidence type="ECO:0000305" key="5"/>
<accession>A1A4I1</accession>
<organism>
    <name type="scientific">Bos taurus</name>
    <name type="common">Bovine</name>
    <dbReference type="NCBI Taxonomy" id="9913"/>
    <lineage>
        <taxon>Eukaryota</taxon>
        <taxon>Metazoa</taxon>
        <taxon>Chordata</taxon>
        <taxon>Craniata</taxon>
        <taxon>Vertebrata</taxon>
        <taxon>Euteleostomi</taxon>
        <taxon>Mammalia</taxon>
        <taxon>Eutheria</taxon>
        <taxon>Laurasiatheria</taxon>
        <taxon>Artiodactyla</taxon>
        <taxon>Ruminantia</taxon>
        <taxon>Pecora</taxon>
        <taxon>Bovidae</taxon>
        <taxon>Bovinae</taxon>
        <taxon>Bos</taxon>
    </lineage>
</organism>
<comment type="function">
    <text evidence="1">Sodium-phosphate symporter which preferentially transports the monovalent form of phosphate with a stoichiometry of two sodium ions per phosphate ion. Plays a critical role in the determination of bone quality and strength by providing phosphate for bone mineralization. Required to maintain normal cerebrospinal fluid phosphate levels. Mediates phosphate-induced calcification of vascular smooth muscle cells (VCMCs) and can functionally compensate for loss of SLC20A1 in VCMCs.</text>
</comment>
<comment type="catalytic activity">
    <reaction evidence="1">
        <text>2 Na(+)(out) + phosphate(out) = 2 Na(+)(in) + phosphate(in)</text>
        <dbReference type="Rhea" id="RHEA:71259"/>
        <dbReference type="ChEBI" id="CHEBI:29101"/>
        <dbReference type="ChEBI" id="CHEBI:43474"/>
    </reaction>
</comment>
<comment type="subunit">
    <text evidence="1">Homodimer.</text>
</comment>
<comment type="subcellular location">
    <subcellularLocation>
        <location evidence="2">Cell membrane</location>
        <topology evidence="3">Multi-pass membrane protein</topology>
    </subcellularLocation>
    <subcellularLocation>
        <location evidence="2">Apical cell membrane</location>
        <topology evidence="3">Multi-pass membrane protein</topology>
    </subcellularLocation>
</comment>
<comment type="similarity">
    <text evidence="5">Belongs to the inorganic phosphate transporter (PiT) (TC 2.A.20) family.</text>
</comment>